<reference key="1">
    <citation type="journal article" date="2011" name="Appl. Environ. Microbiol.">
        <title>Genomic potential of Marinobacter aquaeolei, a biogeochemical 'opportunitroph'.</title>
        <authorList>
            <person name="Singer E."/>
            <person name="Webb E.A."/>
            <person name="Nelson W.C."/>
            <person name="Heidelberg J.F."/>
            <person name="Ivanova N."/>
            <person name="Pati A."/>
            <person name="Edwards K.J."/>
        </authorList>
    </citation>
    <scope>NUCLEOTIDE SEQUENCE [LARGE SCALE GENOMIC DNA]</scope>
    <source>
        <strain>ATCC 700491 / DSM 11845 / VT8</strain>
    </source>
</reference>
<keyword id="KW-0963">Cytoplasm</keyword>
<keyword id="KW-0444">Lipid biosynthesis</keyword>
<keyword id="KW-0443">Lipid metabolism</keyword>
<keyword id="KW-0594">Phospholipid biosynthesis</keyword>
<keyword id="KW-1208">Phospholipid metabolism</keyword>
<keyword id="KW-0808">Transferase</keyword>
<organism>
    <name type="scientific">Marinobacter nauticus (strain ATCC 700491 / DSM 11845 / VT8)</name>
    <name type="common">Marinobacter aquaeolei</name>
    <dbReference type="NCBI Taxonomy" id="351348"/>
    <lineage>
        <taxon>Bacteria</taxon>
        <taxon>Pseudomonadati</taxon>
        <taxon>Pseudomonadota</taxon>
        <taxon>Gammaproteobacteria</taxon>
        <taxon>Pseudomonadales</taxon>
        <taxon>Marinobacteraceae</taxon>
        <taxon>Marinobacter</taxon>
    </lineage>
</organism>
<feature type="chain" id="PRO_0000329239" description="Phosphate acyltransferase">
    <location>
        <begin position="1"/>
        <end position="340"/>
    </location>
</feature>
<sequence length="340" mass="36760">MPHGRVVNTPVTIAIDAMSGDRGAAVVVHAALEAVRENEALSLVLVGIRSELEALLHEGHARIRIVEAADVVRMNERPSHALRHKKNSSMAIALSLVRDGEAQGCVSAGNTGALMAFGRSIIRMYPGIERPAIAKLIPSLRGRCHVLDLGANVDSTAENLYQYALMGSLMASAICRQSEPRVALLNVGEEEIKGNEQVRLASHMLAQCDTINYIGYVEGSDLFRDVADVVVCDGFVGNIALKTGEGVAGLLIELLEQAFTRSMYGRFVGLLARPIIGRLLQLMDPSRHNGASLLGLQGVVIKSHGNANERAMLAAIRQAVREVQLEVPRRINERLDDLML</sequence>
<comment type="function">
    <text evidence="1">Catalyzes the reversible formation of acyl-phosphate (acyl-PO(4)) from acyl-[acyl-carrier-protein] (acyl-ACP). This enzyme utilizes acyl-ACP as fatty acyl donor, but not acyl-CoA.</text>
</comment>
<comment type="catalytic activity">
    <reaction evidence="1">
        <text>a fatty acyl-[ACP] + phosphate = an acyl phosphate + holo-[ACP]</text>
        <dbReference type="Rhea" id="RHEA:42292"/>
        <dbReference type="Rhea" id="RHEA-COMP:9685"/>
        <dbReference type="Rhea" id="RHEA-COMP:14125"/>
        <dbReference type="ChEBI" id="CHEBI:43474"/>
        <dbReference type="ChEBI" id="CHEBI:59918"/>
        <dbReference type="ChEBI" id="CHEBI:64479"/>
        <dbReference type="ChEBI" id="CHEBI:138651"/>
        <dbReference type="EC" id="2.3.1.274"/>
    </reaction>
</comment>
<comment type="pathway">
    <text evidence="1">Lipid metabolism; phospholipid metabolism.</text>
</comment>
<comment type="subunit">
    <text evidence="1">Homodimer. Probably interacts with PlsY.</text>
</comment>
<comment type="subcellular location">
    <subcellularLocation>
        <location evidence="1">Cytoplasm</location>
    </subcellularLocation>
    <text evidence="1">Associated with the membrane possibly through PlsY.</text>
</comment>
<comment type="similarity">
    <text evidence="1">Belongs to the PlsX family.</text>
</comment>
<accession>A1U1T2</accession>
<name>PLSX_MARN8</name>
<proteinExistence type="inferred from homology"/>
<gene>
    <name evidence="1" type="primary">plsX</name>
    <name type="ordered locus">Maqu_1869</name>
</gene>
<dbReference type="EC" id="2.3.1.274" evidence="1"/>
<dbReference type="EMBL" id="CP000514">
    <property type="protein sequence ID" value="ABM18951.1"/>
    <property type="molecule type" value="Genomic_DNA"/>
</dbReference>
<dbReference type="SMR" id="A1U1T2"/>
<dbReference type="STRING" id="351348.Maqu_1869"/>
<dbReference type="KEGG" id="maq:Maqu_1869"/>
<dbReference type="eggNOG" id="COG0416">
    <property type="taxonomic scope" value="Bacteria"/>
</dbReference>
<dbReference type="HOGENOM" id="CLU_039379_1_0_6"/>
<dbReference type="OrthoDB" id="9806408at2"/>
<dbReference type="UniPathway" id="UPA00085"/>
<dbReference type="Proteomes" id="UP000000998">
    <property type="component" value="Chromosome"/>
</dbReference>
<dbReference type="GO" id="GO:0005737">
    <property type="term" value="C:cytoplasm"/>
    <property type="evidence" value="ECO:0007669"/>
    <property type="project" value="UniProtKB-SubCell"/>
</dbReference>
<dbReference type="GO" id="GO:0043811">
    <property type="term" value="F:phosphate:acyl-[acyl carrier protein] acyltransferase activity"/>
    <property type="evidence" value="ECO:0007669"/>
    <property type="project" value="UniProtKB-UniRule"/>
</dbReference>
<dbReference type="GO" id="GO:0006633">
    <property type="term" value="P:fatty acid biosynthetic process"/>
    <property type="evidence" value="ECO:0007669"/>
    <property type="project" value="UniProtKB-UniRule"/>
</dbReference>
<dbReference type="GO" id="GO:0008654">
    <property type="term" value="P:phospholipid biosynthetic process"/>
    <property type="evidence" value="ECO:0007669"/>
    <property type="project" value="UniProtKB-KW"/>
</dbReference>
<dbReference type="Gene3D" id="3.40.718.10">
    <property type="entry name" value="Isopropylmalate Dehydrogenase"/>
    <property type="match status" value="1"/>
</dbReference>
<dbReference type="HAMAP" id="MF_00019">
    <property type="entry name" value="PlsX"/>
    <property type="match status" value="1"/>
</dbReference>
<dbReference type="InterPro" id="IPR003664">
    <property type="entry name" value="FA_synthesis"/>
</dbReference>
<dbReference type="InterPro" id="IPR012281">
    <property type="entry name" value="Phospholipid_synth_PlsX-like"/>
</dbReference>
<dbReference type="NCBIfam" id="TIGR00182">
    <property type="entry name" value="plsX"/>
    <property type="match status" value="1"/>
</dbReference>
<dbReference type="PANTHER" id="PTHR30100">
    <property type="entry name" value="FATTY ACID/PHOSPHOLIPID SYNTHESIS PROTEIN PLSX"/>
    <property type="match status" value="1"/>
</dbReference>
<dbReference type="PANTHER" id="PTHR30100:SF1">
    <property type="entry name" value="PHOSPHATE ACYLTRANSFERASE"/>
    <property type="match status" value="1"/>
</dbReference>
<dbReference type="Pfam" id="PF02504">
    <property type="entry name" value="FA_synthesis"/>
    <property type="match status" value="1"/>
</dbReference>
<dbReference type="PIRSF" id="PIRSF002465">
    <property type="entry name" value="Phsphlp_syn_PlsX"/>
    <property type="match status" value="1"/>
</dbReference>
<dbReference type="SUPFAM" id="SSF53659">
    <property type="entry name" value="Isocitrate/Isopropylmalate dehydrogenase-like"/>
    <property type="match status" value="1"/>
</dbReference>
<evidence type="ECO:0000255" key="1">
    <source>
        <dbReference type="HAMAP-Rule" id="MF_00019"/>
    </source>
</evidence>
<protein>
    <recommendedName>
        <fullName evidence="1">Phosphate acyltransferase</fullName>
        <ecNumber evidence="1">2.3.1.274</ecNumber>
    </recommendedName>
    <alternativeName>
        <fullName evidence="1">Acyl-ACP phosphotransacylase</fullName>
    </alternativeName>
    <alternativeName>
        <fullName evidence="1">Acyl-[acyl-carrier-protein]--phosphate acyltransferase</fullName>
    </alternativeName>
    <alternativeName>
        <fullName evidence="1">Phosphate-acyl-ACP acyltransferase</fullName>
    </alternativeName>
</protein>